<accession>P54462</accession>
<protein>
    <recommendedName>
        <fullName>Threonylcarbamoyladenosine tRNA methylthiotransferase MtaB</fullName>
        <ecNumber evidence="5">2.8.4.5</ecNumber>
    </recommendedName>
    <alternativeName>
        <fullName>tRNA-t(6)A37 methylthiotransferase</fullName>
    </alternativeName>
</protein>
<evidence type="ECO:0000255" key="1">
    <source>
        <dbReference type="PROSITE-ProRule" id="PRU00208"/>
    </source>
</evidence>
<evidence type="ECO:0000255" key="2">
    <source>
        <dbReference type="PROSITE-ProRule" id="PRU00780"/>
    </source>
</evidence>
<evidence type="ECO:0000255" key="3">
    <source>
        <dbReference type="PROSITE-ProRule" id="PRU01266"/>
    </source>
</evidence>
<evidence type="ECO:0000269" key="4">
    <source>
    </source>
</evidence>
<evidence type="ECO:0000269" key="5">
    <source>
    </source>
</evidence>
<evidence type="ECO:0000305" key="6"/>
<evidence type="ECO:0000305" key="7">
    <source>
    </source>
</evidence>
<feature type="chain" id="PRO_0000141729" description="Threonylcarbamoyladenosine tRNA methylthiotransferase MtaB">
    <location>
        <begin position="1"/>
        <end position="451"/>
    </location>
</feature>
<feature type="domain" description="MTTase N-terminal" evidence="2">
    <location>
        <begin position="2"/>
        <end position="114"/>
    </location>
</feature>
<feature type="domain" description="Radical SAM core" evidence="3">
    <location>
        <begin position="139"/>
        <end position="369"/>
    </location>
</feature>
<feature type="domain" description="TRAM" evidence="1">
    <location>
        <begin position="372"/>
        <end position="437"/>
    </location>
</feature>
<feature type="binding site" evidence="2">
    <location>
        <position position="11"/>
    </location>
    <ligand>
        <name>[4Fe-4S] cluster</name>
        <dbReference type="ChEBI" id="CHEBI:49883"/>
        <label>1</label>
    </ligand>
</feature>
<feature type="binding site" evidence="2">
    <location>
        <position position="47"/>
    </location>
    <ligand>
        <name>[4Fe-4S] cluster</name>
        <dbReference type="ChEBI" id="CHEBI:49883"/>
        <label>1</label>
    </ligand>
</feature>
<feature type="binding site" evidence="2">
    <location>
        <position position="78"/>
    </location>
    <ligand>
        <name>[4Fe-4S] cluster</name>
        <dbReference type="ChEBI" id="CHEBI:49883"/>
        <label>1</label>
    </ligand>
</feature>
<feature type="binding site" evidence="2">
    <location>
        <position position="153"/>
    </location>
    <ligand>
        <name>[4Fe-4S] cluster</name>
        <dbReference type="ChEBI" id="CHEBI:49883"/>
        <label>2</label>
        <note>4Fe-4S-S-AdoMet</note>
    </ligand>
</feature>
<feature type="binding site" evidence="2">
    <location>
        <position position="157"/>
    </location>
    <ligand>
        <name>[4Fe-4S] cluster</name>
        <dbReference type="ChEBI" id="CHEBI:49883"/>
        <label>2</label>
        <note>4Fe-4S-S-AdoMet</note>
    </ligand>
</feature>
<feature type="binding site" evidence="2">
    <location>
        <position position="160"/>
    </location>
    <ligand>
        <name>[4Fe-4S] cluster</name>
        <dbReference type="ChEBI" id="CHEBI:49883"/>
        <label>2</label>
        <note>4Fe-4S-S-AdoMet</note>
    </ligand>
</feature>
<organism>
    <name type="scientific">Bacillus subtilis (strain 168)</name>
    <dbReference type="NCBI Taxonomy" id="224308"/>
    <lineage>
        <taxon>Bacteria</taxon>
        <taxon>Bacillati</taxon>
        <taxon>Bacillota</taxon>
        <taxon>Bacilli</taxon>
        <taxon>Bacillales</taxon>
        <taxon>Bacillaceae</taxon>
        <taxon>Bacillus</taxon>
    </lineage>
</organism>
<keyword id="KW-0004">4Fe-4S</keyword>
<keyword id="KW-0963">Cytoplasm</keyword>
<keyword id="KW-0408">Iron</keyword>
<keyword id="KW-0411">Iron-sulfur</keyword>
<keyword id="KW-0479">Metal-binding</keyword>
<keyword id="KW-1185">Reference proteome</keyword>
<keyword id="KW-0949">S-adenosyl-L-methionine</keyword>
<keyword id="KW-0808">Transferase</keyword>
<keyword id="KW-0819">tRNA processing</keyword>
<dbReference type="EC" id="2.8.4.5" evidence="5"/>
<dbReference type="EMBL" id="D84432">
    <property type="protein sequence ID" value="BAA12468.1"/>
    <property type="molecule type" value="Genomic_DNA"/>
</dbReference>
<dbReference type="EMBL" id="D83717">
    <property type="protein sequence ID" value="BAA12080.1"/>
    <property type="molecule type" value="Genomic_DNA"/>
</dbReference>
<dbReference type="EMBL" id="AL009126">
    <property type="protein sequence ID" value="CAB14485.1"/>
    <property type="molecule type" value="Genomic_DNA"/>
</dbReference>
<dbReference type="PIR" id="E69952">
    <property type="entry name" value="E69952"/>
</dbReference>
<dbReference type="RefSeq" id="NP_390421.1">
    <property type="nucleotide sequence ID" value="NC_000964.3"/>
</dbReference>
<dbReference type="RefSeq" id="WP_003230017.1">
    <property type="nucleotide sequence ID" value="NZ_OZ025638.1"/>
</dbReference>
<dbReference type="SMR" id="P54462"/>
<dbReference type="FunCoup" id="P54462">
    <property type="interactions" value="245"/>
</dbReference>
<dbReference type="STRING" id="224308.BSU25430"/>
<dbReference type="PaxDb" id="224308-BSU25430"/>
<dbReference type="EnsemblBacteria" id="CAB14485">
    <property type="protein sequence ID" value="CAB14485"/>
    <property type="gene ID" value="BSU_25430"/>
</dbReference>
<dbReference type="GeneID" id="937857"/>
<dbReference type="KEGG" id="bsu:BSU25430"/>
<dbReference type="PATRIC" id="fig|224308.179.peg.2764"/>
<dbReference type="eggNOG" id="COG0621">
    <property type="taxonomic scope" value="Bacteria"/>
</dbReference>
<dbReference type="InParanoid" id="P54462"/>
<dbReference type="OrthoDB" id="9805215at2"/>
<dbReference type="PhylomeDB" id="P54462"/>
<dbReference type="BioCyc" id="BSUB:BSU25430-MONOMER"/>
<dbReference type="BRENDA" id="2.8.4.5">
    <property type="organism ID" value="658"/>
</dbReference>
<dbReference type="Proteomes" id="UP000001570">
    <property type="component" value="Chromosome"/>
</dbReference>
<dbReference type="GO" id="GO:0005737">
    <property type="term" value="C:cytoplasm"/>
    <property type="evidence" value="ECO:0007669"/>
    <property type="project" value="UniProtKB-SubCell"/>
</dbReference>
<dbReference type="GO" id="GO:0051539">
    <property type="term" value="F:4 iron, 4 sulfur cluster binding"/>
    <property type="evidence" value="ECO:0007669"/>
    <property type="project" value="UniProtKB-KW"/>
</dbReference>
<dbReference type="GO" id="GO:0046872">
    <property type="term" value="F:metal ion binding"/>
    <property type="evidence" value="ECO:0007669"/>
    <property type="project" value="UniProtKB-KW"/>
</dbReference>
<dbReference type="GO" id="GO:0035598">
    <property type="term" value="F:N6-threonylcarbomyladenosine methylthiotransferase activity"/>
    <property type="evidence" value="ECO:0000315"/>
    <property type="project" value="UniProtKB"/>
</dbReference>
<dbReference type="GO" id="GO:0061712">
    <property type="term" value="F:tRNA (N(6)-L-threonylcarbamoyladenosine(37)-C(2))-methylthiotransferase"/>
    <property type="evidence" value="ECO:0007669"/>
    <property type="project" value="UniProtKB-EC"/>
</dbReference>
<dbReference type="GO" id="GO:0035600">
    <property type="term" value="P:tRNA methylthiolation"/>
    <property type="evidence" value="ECO:0000315"/>
    <property type="project" value="UniProtKB"/>
</dbReference>
<dbReference type="CDD" id="cd01335">
    <property type="entry name" value="Radical_SAM"/>
    <property type="match status" value="1"/>
</dbReference>
<dbReference type="FunFam" id="3.40.50.12160:FF:000004">
    <property type="entry name" value="Threonylcarbamoyladenosine tRNA methylthiotransferase MtaB"/>
    <property type="match status" value="1"/>
</dbReference>
<dbReference type="FunFam" id="3.80.30.20:FF:000001">
    <property type="entry name" value="tRNA-2-methylthio-N(6)-dimethylallyladenosine synthase 2"/>
    <property type="match status" value="1"/>
</dbReference>
<dbReference type="Gene3D" id="3.40.50.12160">
    <property type="entry name" value="Methylthiotransferase, N-terminal domain"/>
    <property type="match status" value="1"/>
</dbReference>
<dbReference type="Gene3D" id="3.80.30.20">
    <property type="entry name" value="tm_1862 like domain"/>
    <property type="match status" value="1"/>
</dbReference>
<dbReference type="InterPro" id="IPR006638">
    <property type="entry name" value="Elp3/MiaA/NifB-like_rSAM"/>
</dbReference>
<dbReference type="InterPro" id="IPR005839">
    <property type="entry name" value="Methylthiotransferase"/>
</dbReference>
<dbReference type="InterPro" id="IPR020612">
    <property type="entry name" value="Methylthiotransferase_CS"/>
</dbReference>
<dbReference type="InterPro" id="IPR013848">
    <property type="entry name" value="Methylthiotransferase_N"/>
</dbReference>
<dbReference type="InterPro" id="IPR038135">
    <property type="entry name" value="Methylthiotransferase_N_sf"/>
</dbReference>
<dbReference type="InterPro" id="IPR006467">
    <property type="entry name" value="MiaB-like_bact"/>
</dbReference>
<dbReference type="InterPro" id="IPR007197">
    <property type="entry name" value="rSAM"/>
</dbReference>
<dbReference type="InterPro" id="IPR023404">
    <property type="entry name" value="rSAM_horseshoe"/>
</dbReference>
<dbReference type="InterPro" id="IPR034557">
    <property type="entry name" value="ThrcA_tRNA_MEthiotransferase"/>
</dbReference>
<dbReference type="InterPro" id="IPR002792">
    <property type="entry name" value="TRAM_dom"/>
</dbReference>
<dbReference type="NCBIfam" id="TIGR01579">
    <property type="entry name" value="MiaB-like-C"/>
    <property type="match status" value="1"/>
</dbReference>
<dbReference type="NCBIfam" id="TIGR00089">
    <property type="entry name" value="MiaB/RimO family radical SAM methylthiotransferase"/>
    <property type="match status" value="1"/>
</dbReference>
<dbReference type="PANTHER" id="PTHR11918">
    <property type="entry name" value="RADICAL SAM PROTEINS"/>
    <property type="match status" value="1"/>
</dbReference>
<dbReference type="PANTHER" id="PTHR11918:SF45">
    <property type="entry name" value="THREONYLCARBAMOYLADENOSINE TRNA METHYLTHIOTRANSFERASE"/>
    <property type="match status" value="1"/>
</dbReference>
<dbReference type="Pfam" id="PF04055">
    <property type="entry name" value="Radical_SAM"/>
    <property type="match status" value="1"/>
</dbReference>
<dbReference type="Pfam" id="PF01938">
    <property type="entry name" value="TRAM"/>
    <property type="match status" value="1"/>
</dbReference>
<dbReference type="Pfam" id="PF00919">
    <property type="entry name" value="UPF0004"/>
    <property type="match status" value="1"/>
</dbReference>
<dbReference type="SFLD" id="SFLDG01082">
    <property type="entry name" value="B12-binding_domain_containing"/>
    <property type="match status" value="1"/>
</dbReference>
<dbReference type="SFLD" id="SFLDS00029">
    <property type="entry name" value="Radical_SAM"/>
    <property type="match status" value="1"/>
</dbReference>
<dbReference type="SFLD" id="SFLDF00295">
    <property type="entry name" value="threonylcarbamoyladenosine_tRN"/>
    <property type="match status" value="1"/>
</dbReference>
<dbReference type="SMART" id="SM00729">
    <property type="entry name" value="Elp3"/>
    <property type="match status" value="1"/>
</dbReference>
<dbReference type="SUPFAM" id="SSF102114">
    <property type="entry name" value="Radical SAM enzymes"/>
    <property type="match status" value="1"/>
</dbReference>
<dbReference type="PROSITE" id="PS51449">
    <property type="entry name" value="MTTASE_N"/>
    <property type="match status" value="1"/>
</dbReference>
<dbReference type="PROSITE" id="PS01278">
    <property type="entry name" value="MTTASE_RADICAL"/>
    <property type="match status" value="1"/>
</dbReference>
<dbReference type="PROSITE" id="PS51918">
    <property type="entry name" value="RADICAL_SAM"/>
    <property type="match status" value="1"/>
</dbReference>
<dbReference type="PROSITE" id="PS50926">
    <property type="entry name" value="TRAM"/>
    <property type="match status" value="1"/>
</dbReference>
<name>MTAB_BACSU</name>
<proteinExistence type="evidence at protein level"/>
<comment type="function">
    <text evidence="4 5">Catalyzes the methylthiolation of N6-threonylcarbamoyladenosine (t(6)A), leading to the formation of 2-methylthio-N6-threonylcarbamoyladenosine (ms(2)t(6)A) at position 37 in tRNAs that read codons beginning with adenine.</text>
</comment>
<comment type="catalytic activity">
    <reaction evidence="5">
        <text>N(6)-L-threonylcarbamoyladenosine(37) in tRNA + (sulfur carrier)-SH + AH2 + 2 S-adenosyl-L-methionine = 2-methylsulfanyl-N(6)-L-threonylcarbamoyladenosine(37) in tRNA + (sulfur carrier)-H + 5'-deoxyadenosine + L-methionine + A + S-adenosyl-L-homocysteine + 2 H(+)</text>
        <dbReference type="Rhea" id="RHEA:37075"/>
        <dbReference type="Rhea" id="RHEA-COMP:10163"/>
        <dbReference type="Rhea" id="RHEA-COMP:11092"/>
        <dbReference type="Rhea" id="RHEA-COMP:14737"/>
        <dbReference type="Rhea" id="RHEA-COMP:14739"/>
        <dbReference type="ChEBI" id="CHEBI:13193"/>
        <dbReference type="ChEBI" id="CHEBI:15378"/>
        <dbReference type="ChEBI" id="CHEBI:17319"/>
        <dbReference type="ChEBI" id="CHEBI:17499"/>
        <dbReference type="ChEBI" id="CHEBI:29917"/>
        <dbReference type="ChEBI" id="CHEBI:57844"/>
        <dbReference type="ChEBI" id="CHEBI:57856"/>
        <dbReference type="ChEBI" id="CHEBI:59789"/>
        <dbReference type="ChEBI" id="CHEBI:64428"/>
        <dbReference type="ChEBI" id="CHEBI:74418"/>
        <dbReference type="ChEBI" id="CHEBI:74420"/>
        <dbReference type="EC" id="2.8.4.5"/>
    </reaction>
</comment>
<comment type="cofactor">
    <cofactor evidence="7">
        <name>[4Fe-4S] cluster</name>
        <dbReference type="ChEBI" id="CHEBI:49883"/>
    </cofactor>
    <text evidence="7">Binds 2 [4Fe-4S] clusters. One cluster is coordinated with 3 cysteines and an exchangeable S-adenosyl-L-methionine.</text>
</comment>
<comment type="subcellular location">
    <subcellularLocation>
        <location evidence="2 5">Cytoplasm</location>
    </subcellularLocation>
</comment>
<comment type="similarity">
    <text evidence="6">Belongs to the methylthiotransferase family. MtaB subfamily.</text>
</comment>
<reference key="1">
    <citation type="journal article" date="1996" name="Microbiology">
        <title>Systematic sequencing of the 283 kb 210 degrees-232 degrees region of the Bacillus subtilis genome containing the skin element and many sporulation genes.</title>
        <authorList>
            <person name="Mizuno M."/>
            <person name="Masuda S."/>
            <person name="Takemaru K."/>
            <person name="Hosono S."/>
            <person name="Sato T."/>
            <person name="Takeuchi M."/>
            <person name="Kobayashi Y."/>
        </authorList>
    </citation>
    <scope>NUCLEOTIDE SEQUENCE [GENOMIC DNA]</scope>
    <source>
        <strain>168 / JH642</strain>
    </source>
</reference>
<reference key="2">
    <citation type="journal article" date="1997" name="J. Bacteriol.">
        <title>The dnaK operon of Bacillus subtilis is heptacistronic.</title>
        <authorList>
            <person name="Homuth G."/>
            <person name="Masuda S."/>
            <person name="Mogk A."/>
            <person name="Kobayashi Y."/>
            <person name="Schumann W."/>
        </authorList>
    </citation>
    <scope>NUCLEOTIDE SEQUENCE [GENOMIC DNA]</scope>
    <source>
        <strain>168 / JH642</strain>
    </source>
</reference>
<reference key="3">
    <citation type="journal article" date="1997" name="Nature">
        <title>The complete genome sequence of the Gram-positive bacterium Bacillus subtilis.</title>
        <authorList>
            <person name="Kunst F."/>
            <person name="Ogasawara N."/>
            <person name="Moszer I."/>
            <person name="Albertini A.M."/>
            <person name="Alloni G."/>
            <person name="Azevedo V."/>
            <person name="Bertero M.G."/>
            <person name="Bessieres P."/>
            <person name="Bolotin A."/>
            <person name="Borchert S."/>
            <person name="Borriss R."/>
            <person name="Boursier L."/>
            <person name="Brans A."/>
            <person name="Braun M."/>
            <person name="Brignell S.C."/>
            <person name="Bron S."/>
            <person name="Brouillet S."/>
            <person name="Bruschi C.V."/>
            <person name="Caldwell B."/>
            <person name="Capuano V."/>
            <person name="Carter N.M."/>
            <person name="Choi S.-K."/>
            <person name="Codani J.-J."/>
            <person name="Connerton I.F."/>
            <person name="Cummings N.J."/>
            <person name="Daniel R.A."/>
            <person name="Denizot F."/>
            <person name="Devine K.M."/>
            <person name="Duesterhoeft A."/>
            <person name="Ehrlich S.D."/>
            <person name="Emmerson P.T."/>
            <person name="Entian K.-D."/>
            <person name="Errington J."/>
            <person name="Fabret C."/>
            <person name="Ferrari E."/>
            <person name="Foulger D."/>
            <person name="Fritz C."/>
            <person name="Fujita M."/>
            <person name="Fujita Y."/>
            <person name="Fuma S."/>
            <person name="Galizzi A."/>
            <person name="Galleron N."/>
            <person name="Ghim S.-Y."/>
            <person name="Glaser P."/>
            <person name="Goffeau A."/>
            <person name="Golightly E.J."/>
            <person name="Grandi G."/>
            <person name="Guiseppi G."/>
            <person name="Guy B.J."/>
            <person name="Haga K."/>
            <person name="Haiech J."/>
            <person name="Harwood C.R."/>
            <person name="Henaut A."/>
            <person name="Hilbert H."/>
            <person name="Holsappel S."/>
            <person name="Hosono S."/>
            <person name="Hullo M.-F."/>
            <person name="Itaya M."/>
            <person name="Jones L.-M."/>
            <person name="Joris B."/>
            <person name="Karamata D."/>
            <person name="Kasahara Y."/>
            <person name="Klaerr-Blanchard M."/>
            <person name="Klein C."/>
            <person name="Kobayashi Y."/>
            <person name="Koetter P."/>
            <person name="Koningstein G."/>
            <person name="Krogh S."/>
            <person name="Kumano M."/>
            <person name="Kurita K."/>
            <person name="Lapidus A."/>
            <person name="Lardinois S."/>
            <person name="Lauber J."/>
            <person name="Lazarevic V."/>
            <person name="Lee S.-M."/>
            <person name="Levine A."/>
            <person name="Liu H."/>
            <person name="Masuda S."/>
            <person name="Mauel C."/>
            <person name="Medigue C."/>
            <person name="Medina N."/>
            <person name="Mellado R.P."/>
            <person name="Mizuno M."/>
            <person name="Moestl D."/>
            <person name="Nakai S."/>
            <person name="Noback M."/>
            <person name="Noone D."/>
            <person name="O'Reilly M."/>
            <person name="Ogawa K."/>
            <person name="Ogiwara A."/>
            <person name="Oudega B."/>
            <person name="Park S.-H."/>
            <person name="Parro V."/>
            <person name="Pohl T.M."/>
            <person name="Portetelle D."/>
            <person name="Porwollik S."/>
            <person name="Prescott A.M."/>
            <person name="Presecan E."/>
            <person name="Pujic P."/>
            <person name="Purnelle B."/>
            <person name="Rapoport G."/>
            <person name="Rey M."/>
            <person name="Reynolds S."/>
            <person name="Rieger M."/>
            <person name="Rivolta C."/>
            <person name="Rocha E."/>
            <person name="Roche B."/>
            <person name="Rose M."/>
            <person name="Sadaie Y."/>
            <person name="Sato T."/>
            <person name="Scanlan E."/>
            <person name="Schleich S."/>
            <person name="Schroeter R."/>
            <person name="Scoffone F."/>
            <person name="Sekiguchi J."/>
            <person name="Sekowska A."/>
            <person name="Seror S.J."/>
            <person name="Serror P."/>
            <person name="Shin B.-S."/>
            <person name="Soldo B."/>
            <person name="Sorokin A."/>
            <person name="Tacconi E."/>
            <person name="Takagi T."/>
            <person name="Takahashi H."/>
            <person name="Takemaru K."/>
            <person name="Takeuchi M."/>
            <person name="Tamakoshi A."/>
            <person name="Tanaka T."/>
            <person name="Terpstra P."/>
            <person name="Tognoni A."/>
            <person name="Tosato V."/>
            <person name="Uchiyama S."/>
            <person name="Vandenbol M."/>
            <person name="Vannier F."/>
            <person name="Vassarotti A."/>
            <person name="Viari A."/>
            <person name="Wambutt R."/>
            <person name="Wedler E."/>
            <person name="Wedler H."/>
            <person name="Weitzenegger T."/>
            <person name="Winters P."/>
            <person name="Wipat A."/>
            <person name="Yamamoto H."/>
            <person name="Yamane K."/>
            <person name="Yasumoto K."/>
            <person name="Yata K."/>
            <person name="Yoshida K."/>
            <person name="Yoshikawa H.-F."/>
            <person name="Zumstein E."/>
            <person name="Yoshikawa H."/>
            <person name="Danchin A."/>
        </authorList>
    </citation>
    <scope>NUCLEOTIDE SEQUENCE [LARGE SCALE GENOMIC DNA]</scope>
    <source>
        <strain>168</strain>
    </source>
</reference>
<reference key="4">
    <citation type="journal article" date="2010" name="J. Biol. Chem.">
        <title>Identification of eukaryotic and prokaryotic methylthiotransferase for biosynthesis of 2-methylthio-N6-threonylcarbamoyladenosine in tRNA.</title>
        <authorList>
            <person name="Arragain S."/>
            <person name="Handelman S.K."/>
            <person name="Forouhar F."/>
            <person name="Wei F.Y."/>
            <person name="Tomizawa K."/>
            <person name="Hunt J.F."/>
            <person name="Douki T."/>
            <person name="Fontecave M."/>
            <person name="Mulliez E."/>
            <person name="Atta M."/>
        </authorList>
    </citation>
    <scope>FUNCTION</scope>
    <scope>CATALYTIC ACTIVITY</scope>
    <scope>COFACTOR</scope>
    <scope>SUBCELLULAR LOCATION</scope>
    <scope>GENE NAME</scope>
</reference>
<reference key="5">
    <citation type="journal article" date="2010" name="Nucleic Acids Res.">
        <title>Functional characterization of the YmcB and YqeV tRNA methylthiotransferases of Bacillus subtilis.</title>
        <authorList>
            <person name="Anton B.P."/>
            <person name="Russell S.P."/>
            <person name="Vertrees J."/>
            <person name="Kasif S."/>
            <person name="Raleigh E.A."/>
            <person name="Limbach P.A."/>
            <person name="Roberts R.J."/>
        </authorList>
    </citation>
    <scope>FUNCTION AS A METHYLTHIOTRANSFERASE</scope>
    <scope>GENE NAME</scope>
    <source>
        <strain>168</strain>
    </source>
</reference>
<gene>
    <name type="primary">mtaB</name>
    <name type="synonym">tmtB</name>
    <name type="synonym">yqeV</name>
    <name type="ordered locus">BSU25430</name>
</gene>
<sequence length="451" mass="51658">MATVAFHTLGCKVNHYETEAIWQLFKEAGYERRDFEQTADVYVINTCTVTNTGDKKSRQVIRRAIRQNPDGVICVTGCYAQTSPAEIMAIPGVDIVVGTQDREKMLGYIDQYREERQPINGVSNIMKARVYEELDVPAFTDRTRASLKIQEGCNNFCTFCIIPWARGLLRSRDPEEVIKQAQQLVDAGYKEIVLTGIHTGGYGEDMKDYNFAKLLSELDTRVEGVKRIRISSIEASQITDEVIEVLDRSDKIVNHLHIPIQSGSNTVLKRMRRKYTMEFFADRLNKLKKALPGLAVTSDVIVGFPGETEEEFMETYNFIKEHKFSELHVFPYSKRTGTPAARMEDQVDENVKNERVHRLIALSDQLAKEYASQYENEVLEIIPEEAFKETEEENMFVGYTDNYMKVVFKGTEDMIGKIVKVKILKAGYPYNEGQFVRVVEDEITEHMRLSS</sequence>